<feature type="chain" id="PRO_0000198048" description="Putative type I specificity subunit S.MpnORF289P C-terminus">
    <location>
        <begin position="1"/>
        <end position="145"/>
    </location>
</feature>
<comment type="function">
    <text evidence="2 4">The C-terminal section of a specificity (S) subunit of a type I methyltransferase (MTase); this subunit dictates DNA sequence specificity. The single R subunit has multiple frameshifts and is probably not expressed.</text>
</comment>
<comment type="subunit">
    <text evidence="1">The methyltransferase is composed of M and S polypeptides.</text>
</comment>
<comment type="domain">
    <text evidence="1">Contains two DNA recognition domains, each specifying recognition of one of the two defined components of the target sequence.</text>
</comment>
<comment type="similarity">
    <text evidence="3">Belongs to the type-I restriction system S methylase family.</text>
</comment>
<gene>
    <name type="ordered locus">MPN_290</name>
    <name type="ORF">H10_orf145L</name>
    <name type="ORF">MP545</name>
</gene>
<reference key="1">
    <citation type="journal article" date="1996" name="Nucleic Acids Res.">
        <title>Complete sequence analysis of the genome of the bacterium Mycoplasma pneumoniae.</title>
        <authorList>
            <person name="Himmelreich R."/>
            <person name="Hilbert H."/>
            <person name="Plagens H."/>
            <person name="Pirkl E."/>
            <person name="Li B.-C."/>
            <person name="Herrmann R."/>
        </authorList>
    </citation>
    <scope>NUCLEOTIDE SEQUENCE [LARGE SCALE GENOMIC DNA]</scope>
    <source>
        <strain>ATCC 29342 / M129 / Subtype 1</strain>
    </source>
</reference>
<reference key="2">
    <citation type="journal article" date="2003" name="Nucleic Acids Res.">
        <title>A nomenclature for restriction enzymes, DNA methyltransferases, homing endonucleases and their genes.</title>
        <authorList>
            <person name="Roberts R.J."/>
            <person name="Belfort M."/>
            <person name="Bestor T."/>
            <person name="Bhagwat A.S."/>
            <person name="Bickle T.A."/>
            <person name="Bitinaite J."/>
            <person name="Blumenthal R.M."/>
            <person name="Degtyarev S.K."/>
            <person name="Dryden D.T."/>
            <person name="Dybvig K."/>
            <person name="Firman K."/>
            <person name="Gromova E.S."/>
            <person name="Gumport R.I."/>
            <person name="Halford S.E."/>
            <person name="Hattman S."/>
            <person name="Heitman J."/>
            <person name="Hornby D.P."/>
            <person name="Janulaitis A."/>
            <person name="Jeltsch A."/>
            <person name="Josephsen J."/>
            <person name="Kiss A."/>
            <person name="Klaenhammer T.R."/>
            <person name="Kobayashi I."/>
            <person name="Kong H."/>
            <person name="Krueger D.H."/>
            <person name="Lacks S."/>
            <person name="Marinus M.G."/>
            <person name="Miyahara M."/>
            <person name="Morgan R.D."/>
            <person name="Murray N.E."/>
            <person name="Nagaraja V."/>
            <person name="Piekarowicz A."/>
            <person name="Pingoud A."/>
            <person name="Raleigh E."/>
            <person name="Rao D.N."/>
            <person name="Reich N."/>
            <person name="Repin V.E."/>
            <person name="Selker E.U."/>
            <person name="Shaw P.C."/>
            <person name="Stein D.C."/>
            <person name="Stoddard B.L."/>
            <person name="Szybalski W."/>
            <person name="Trautner T.A."/>
            <person name="Van Etten J.L."/>
            <person name="Vitor J.M."/>
            <person name="Wilson G.G."/>
            <person name="Xu S.Y."/>
        </authorList>
    </citation>
    <scope>NOMENCLATURE</scope>
</reference>
<evidence type="ECO:0000250" key="1">
    <source>
        <dbReference type="UniProtKB" id="P05719"/>
    </source>
</evidence>
<evidence type="ECO:0000303" key="2">
    <source>
    </source>
</evidence>
<evidence type="ECO:0000305" key="3"/>
<evidence type="ECO:0000305" key="4">
    <source>
    </source>
</evidence>
<sequence>MVYSKTFRVEEKSITVSARGTIGVVFYRDFAYLPAVSLICFVPKEEFDIRFLFHALRAIKFKKQGSATGQLTVAQFKEYGIHVPSLKKQKEIAAILDPLYSFFTDLNEGLPAEIELRKKQLDYYQNFLFNWIQKQKELVEQASTN</sequence>
<organism>
    <name type="scientific">Mycoplasma pneumoniae (strain ATCC 29342 / M129 / Subtype 1)</name>
    <name type="common">Mycoplasmoides pneumoniae</name>
    <dbReference type="NCBI Taxonomy" id="272634"/>
    <lineage>
        <taxon>Bacteria</taxon>
        <taxon>Bacillati</taxon>
        <taxon>Mycoplasmatota</taxon>
        <taxon>Mycoplasmoidales</taxon>
        <taxon>Mycoplasmoidaceae</taxon>
        <taxon>Mycoplasmoides</taxon>
    </lineage>
</organism>
<proteinExistence type="inferred from homology"/>
<protein>
    <recommendedName>
        <fullName evidence="2">Putative type I specificity subunit S.MpnORF289P C-terminus</fullName>
        <shortName>S protein</shortName>
        <shortName evidence="2">S.MpnORF289P C-terminus</shortName>
    </recommendedName>
    <alternativeName>
        <fullName>Putative type-1 specificity subunit MPN_290</fullName>
    </alternativeName>
    <alternativeName>
        <fullName>S.MpnORFEAP</fullName>
    </alternativeName>
</protein>
<keyword id="KW-0238">DNA-binding</keyword>
<keyword id="KW-1185">Reference proteome</keyword>
<keyword id="KW-0680">Restriction system</keyword>
<name>T1SY_MYCPN</name>
<dbReference type="EMBL" id="U00089">
    <property type="protein sequence ID" value="AAB96193.1"/>
    <property type="molecule type" value="Genomic_DNA"/>
</dbReference>
<dbReference type="PIR" id="S73871">
    <property type="entry name" value="S73871"/>
</dbReference>
<dbReference type="RefSeq" id="NP_109978.1">
    <property type="nucleotide sequence ID" value="NC_000912.1"/>
</dbReference>
<dbReference type="SMR" id="P75487"/>
<dbReference type="STRING" id="272634.MPN_290"/>
<dbReference type="EnsemblBacteria" id="AAB96193">
    <property type="protein sequence ID" value="AAB96193"/>
    <property type="gene ID" value="MPN_290"/>
</dbReference>
<dbReference type="KEGG" id="mpn:MPN_290"/>
<dbReference type="PATRIC" id="fig|272634.6.peg.314"/>
<dbReference type="HOGENOM" id="CLU_021095_6_1_14"/>
<dbReference type="OrthoDB" id="9795776at2"/>
<dbReference type="BioCyc" id="MPNE272634:G1GJ3-457-MONOMER"/>
<dbReference type="PRO" id="PR:P75487"/>
<dbReference type="Proteomes" id="UP000000808">
    <property type="component" value="Chromosome"/>
</dbReference>
<dbReference type="GO" id="GO:0003677">
    <property type="term" value="F:DNA binding"/>
    <property type="evidence" value="ECO:0007669"/>
    <property type="project" value="UniProtKB-KW"/>
</dbReference>
<dbReference type="GO" id="GO:0009307">
    <property type="term" value="P:DNA restriction-modification system"/>
    <property type="evidence" value="ECO:0007669"/>
    <property type="project" value="UniProtKB-KW"/>
</dbReference>
<dbReference type="Gene3D" id="3.90.220.20">
    <property type="entry name" value="DNA methylase specificity domains"/>
    <property type="match status" value="1"/>
</dbReference>
<dbReference type="InterPro" id="IPR000055">
    <property type="entry name" value="Restrct_endonuc_typeI_TRD"/>
</dbReference>
<dbReference type="InterPro" id="IPR044946">
    <property type="entry name" value="Restrct_endonuc_typeI_TRD_sf"/>
</dbReference>
<dbReference type="Pfam" id="PF01420">
    <property type="entry name" value="Methylase_S"/>
    <property type="match status" value="1"/>
</dbReference>
<dbReference type="SUPFAM" id="SSF116734">
    <property type="entry name" value="DNA methylase specificity domain"/>
    <property type="match status" value="1"/>
</dbReference>
<accession>P75487</accession>